<evidence type="ECO:0000305" key="1"/>
<accession>C0H3X8</accession>
<name>YGZC_BACSU</name>
<comment type="subcellular location">
    <subcellularLocation>
        <location evidence="1">Spore coat</location>
    </subcellularLocation>
</comment>
<comment type="similarity">
    <text evidence="1">Belongs to the CotF family.</text>
</comment>
<gene>
    <name type="primary">ygzC</name>
    <name type="ordered locus">BSU08779</name>
</gene>
<sequence length="90" mass="10571">MYRSKKQSQILSYQELLKKQRRWFPIEQSLCPKDILDLLTTIKTSINKYTVATTATENPHIRRALHDQLDTAVYLHDELSDLLLEKGWLG</sequence>
<proteinExistence type="inferred from homology"/>
<dbReference type="EMBL" id="AL009126">
    <property type="protein sequence ID" value="CAX52583.1"/>
    <property type="molecule type" value="Genomic_DNA"/>
</dbReference>
<dbReference type="RefSeq" id="WP_010886449.1">
    <property type="nucleotide sequence ID" value="NZ_OZ025638.1"/>
</dbReference>
<dbReference type="RefSeq" id="YP_003097696.1">
    <property type="nucleotide sequence ID" value="NC_000964.3"/>
</dbReference>
<dbReference type="SMR" id="C0H3X8"/>
<dbReference type="PaxDb" id="224308-BSU08779"/>
<dbReference type="EnsemblBacteria" id="CAX52583">
    <property type="protein sequence ID" value="CAX52583"/>
    <property type="gene ID" value="BSU_08779"/>
</dbReference>
<dbReference type="GeneID" id="8302962"/>
<dbReference type="KEGG" id="bsu:BSU08779"/>
<dbReference type="PATRIC" id="fig|224308.43.peg.918"/>
<dbReference type="eggNOG" id="COG5577">
    <property type="taxonomic scope" value="Bacteria"/>
</dbReference>
<dbReference type="InParanoid" id="C0H3X8"/>
<dbReference type="OrthoDB" id="2939798at2"/>
<dbReference type="BioCyc" id="BSUB:BSU08779-MONOMER"/>
<dbReference type="Proteomes" id="UP000001570">
    <property type="component" value="Chromosome"/>
</dbReference>
<dbReference type="GO" id="GO:0030435">
    <property type="term" value="P:sporulation resulting in formation of a cellular spore"/>
    <property type="evidence" value="ECO:0007669"/>
    <property type="project" value="UniProtKB-KW"/>
</dbReference>
<dbReference type="InterPro" id="IPR012851">
    <property type="entry name" value="Spore_coat_CotF-like"/>
</dbReference>
<dbReference type="PANTHER" id="PTHR39183">
    <property type="entry name" value="SPORE COAT PROTEIN F-LIKE PROTEIN YHCQ"/>
    <property type="match status" value="1"/>
</dbReference>
<dbReference type="PANTHER" id="PTHR39183:SF1">
    <property type="entry name" value="SPORE COAT PROTEIN F-LIKE PROTEIN YHCQ"/>
    <property type="match status" value="1"/>
</dbReference>
<dbReference type="Pfam" id="PF07875">
    <property type="entry name" value="Coat_F"/>
    <property type="match status" value="1"/>
</dbReference>
<protein>
    <recommendedName>
        <fullName>Spore coat protein F-like protein YgzC</fullName>
    </recommendedName>
</protein>
<keyword id="KW-1185">Reference proteome</keyword>
<keyword id="KW-0749">Sporulation</keyword>
<reference key="1">
    <citation type="journal article" date="1997" name="Nature">
        <title>The complete genome sequence of the Gram-positive bacterium Bacillus subtilis.</title>
        <authorList>
            <person name="Kunst F."/>
            <person name="Ogasawara N."/>
            <person name="Moszer I."/>
            <person name="Albertini A.M."/>
            <person name="Alloni G."/>
            <person name="Azevedo V."/>
            <person name="Bertero M.G."/>
            <person name="Bessieres P."/>
            <person name="Bolotin A."/>
            <person name="Borchert S."/>
            <person name="Borriss R."/>
            <person name="Boursier L."/>
            <person name="Brans A."/>
            <person name="Braun M."/>
            <person name="Brignell S.C."/>
            <person name="Bron S."/>
            <person name="Brouillet S."/>
            <person name="Bruschi C.V."/>
            <person name="Caldwell B."/>
            <person name="Capuano V."/>
            <person name="Carter N.M."/>
            <person name="Choi S.-K."/>
            <person name="Codani J.-J."/>
            <person name="Connerton I.F."/>
            <person name="Cummings N.J."/>
            <person name="Daniel R.A."/>
            <person name="Denizot F."/>
            <person name="Devine K.M."/>
            <person name="Duesterhoeft A."/>
            <person name="Ehrlich S.D."/>
            <person name="Emmerson P.T."/>
            <person name="Entian K.-D."/>
            <person name="Errington J."/>
            <person name="Fabret C."/>
            <person name="Ferrari E."/>
            <person name="Foulger D."/>
            <person name="Fritz C."/>
            <person name="Fujita M."/>
            <person name="Fujita Y."/>
            <person name="Fuma S."/>
            <person name="Galizzi A."/>
            <person name="Galleron N."/>
            <person name="Ghim S.-Y."/>
            <person name="Glaser P."/>
            <person name="Goffeau A."/>
            <person name="Golightly E.J."/>
            <person name="Grandi G."/>
            <person name="Guiseppi G."/>
            <person name="Guy B.J."/>
            <person name="Haga K."/>
            <person name="Haiech J."/>
            <person name="Harwood C.R."/>
            <person name="Henaut A."/>
            <person name="Hilbert H."/>
            <person name="Holsappel S."/>
            <person name="Hosono S."/>
            <person name="Hullo M.-F."/>
            <person name="Itaya M."/>
            <person name="Jones L.-M."/>
            <person name="Joris B."/>
            <person name="Karamata D."/>
            <person name="Kasahara Y."/>
            <person name="Klaerr-Blanchard M."/>
            <person name="Klein C."/>
            <person name="Kobayashi Y."/>
            <person name="Koetter P."/>
            <person name="Koningstein G."/>
            <person name="Krogh S."/>
            <person name="Kumano M."/>
            <person name="Kurita K."/>
            <person name="Lapidus A."/>
            <person name="Lardinois S."/>
            <person name="Lauber J."/>
            <person name="Lazarevic V."/>
            <person name="Lee S.-M."/>
            <person name="Levine A."/>
            <person name="Liu H."/>
            <person name="Masuda S."/>
            <person name="Mauel C."/>
            <person name="Medigue C."/>
            <person name="Medina N."/>
            <person name="Mellado R.P."/>
            <person name="Mizuno M."/>
            <person name="Moestl D."/>
            <person name="Nakai S."/>
            <person name="Noback M."/>
            <person name="Noone D."/>
            <person name="O'Reilly M."/>
            <person name="Ogawa K."/>
            <person name="Ogiwara A."/>
            <person name="Oudega B."/>
            <person name="Park S.-H."/>
            <person name="Parro V."/>
            <person name="Pohl T.M."/>
            <person name="Portetelle D."/>
            <person name="Porwollik S."/>
            <person name="Prescott A.M."/>
            <person name="Presecan E."/>
            <person name="Pujic P."/>
            <person name="Purnelle B."/>
            <person name="Rapoport G."/>
            <person name="Rey M."/>
            <person name="Reynolds S."/>
            <person name="Rieger M."/>
            <person name="Rivolta C."/>
            <person name="Rocha E."/>
            <person name="Roche B."/>
            <person name="Rose M."/>
            <person name="Sadaie Y."/>
            <person name="Sato T."/>
            <person name="Scanlan E."/>
            <person name="Schleich S."/>
            <person name="Schroeter R."/>
            <person name="Scoffone F."/>
            <person name="Sekiguchi J."/>
            <person name="Sekowska A."/>
            <person name="Seror S.J."/>
            <person name="Serror P."/>
            <person name="Shin B.-S."/>
            <person name="Soldo B."/>
            <person name="Sorokin A."/>
            <person name="Tacconi E."/>
            <person name="Takagi T."/>
            <person name="Takahashi H."/>
            <person name="Takemaru K."/>
            <person name="Takeuchi M."/>
            <person name="Tamakoshi A."/>
            <person name="Tanaka T."/>
            <person name="Terpstra P."/>
            <person name="Tognoni A."/>
            <person name="Tosato V."/>
            <person name="Uchiyama S."/>
            <person name="Vandenbol M."/>
            <person name="Vannier F."/>
            <person name="Vassarotti A."/>
            <person name="Viari A."/>
            <person name="Wambutt R."/>
            <person name="Wedler E."/>
            <person name="Wedler H."/>
            <person name="Weitzenegger T."/>
            <person name="Winters P."/>
            <person name="Wipat A."/>
            <person name="Yamamoto H."/>
            <person name="Yamane K."/>
            <person name="Yasumoto K."/>
            <person name="Yata K."/>
            <person name="Yoshida K."/>
            <person name="Yoshikawa H.-F."/>
            <person name="Zumstein E."/>
            <person name="Yoshikawa H."/>
            <person name="Danchin A."/>
        </authorList>
    </citation>
    <scope>NUCLEOTIDE SEQUENCE [LARGE SCALE GENOMIC DNA]</scope>
    <source>
        <strain>168</strain>
    </source>
</reference>
<feature type="chain" id="PRO_0000387935" description="Spore coat protein F-like protein YgzC">
    <location>
        <begin position="1"/>
        <end position="90"/>
    </location>
</feature>
<organism>
    <name type="scientific">Bacillus subtilis (strain 168)</name>
    <dbReference type="NCBI Taxonomy" id="224308"/>
    <lineage>
        <taxon>Bacteria</taxon>
        <taxon>Bacillati</taxon>
        <taxon>Bacillota</taxon>
        <taxon>Bacilli</taxon>
        <taxon>Bacillales</taxon>
        <taxon>Bacillaceae</taxon>
        <taxon>Bacillus</taxon>
    </lineage>
</organism>